<dbReference type="EC" id="2.7.4.6"/>
<dbReference type="EMBL" id="AC007843">
    <property type="protein sequence ID" value="AAF97316.1"/>
    <property type="status" value="ALT_SEQ"/>
    <property type="molecule type" value="Genomic_DNA"/>
</dbReference>
<dbReference type="EMBL" id="CP002684">
    <property type="protein sequence ID" value="AEE29584.1"/>
    <property type="molecule type" value="Genomic_DNA"/>
</dbReference>
<dbReference type="EMBL" id="BT012352">
    <property type="protein sequence ID" value="AAS77477.1"/>
    <property type="molecule type" value="mRNA"/>
</dbReference>
<dbReference type="EMBL" id="BT012371">
    <property type="protein sequence ID" value="AAS88761.1"/>
    <property type="molecule type" value="mRNA"/>
</dbReference>
<dbReference type="RefSeq" id="NP_001185021.1">
    <molecule id="Q6NLG3-1"/>
    <property type="nucleotide sequence ID" value="NM_001198092.2"/>
</dbReference>
<dbReference type="SMR" id="Q6NLG3"/>
<dbReference type="FunCoup" id="Q6NLG3">
    <property type="interactions" value="1091"/>
</dbReference>
<dbReference type="STRING" id="3702.Q6NLG3"/>
<dbReference type="GlyGen" id="Q6NLG3">
    <property type="glycosylation" value="1 site"/>
</dbReference>
<dbReference type="PaxDb" id="3702-AT1G17410.1"/>
<dbReference type="ProteomicsDB" id="251130">
    <molecule id="Q6NLG3-1"/>
</dbReference>
<dbReference type="EnsemblPlants" id="AT1G17410.2">
    <molecule id="Q6NLG3-1"/>
    <property type="protein sequence ID" value="AT1G17410.2"/>
    <property type="gene ID" value="AT1G17410"/>
</dbReference>
<dbReference type="GeneID" id="838313"/>
<dbReference type="Gramene" id="AT1G17410.2">
    <molecule id="Q6NLG3-1"/>
    <property type="protein sequence ID" value="AT1G17410.2"/>
    <property type="gene ID" value="AT1G17410"/>
</dbReference>
<dbReference type="KEGG" id="ath:AT1G17410"/>
<dbReference type="Araport" id="AT1G17410"/>
<dbReference type="TAIR" id="AT1G17410"/>
<dbReference type="eggNOG" id="KOG0888">
    <property type="taxonomic scope" value="Eukaryota"/>
</dbReference>
<dbReference type="HOGENOM" id="CLU_060216_8_3_1"/>
<dbReference type="InParanoid" id="Q6NLG3"/>
<dbReference type="OMA" id="HNAISYW"/>
<dbReference type="PhylomeDB" id="Q6NLG3"/>
<dbReference type="BioCyc" id="ARA:AT1G17410-MONOMER"/>
<dbReference type="PRO" id="PR:Q6NLG3"/>
<dbReference type="Proteomes" id="UP000006548">
    <property type="component" value="Chromosome 1"/>
</dbReference>
<dbReference type="ExpressionAtlas" id="Q6NLG3">
    <property type="expression patterns" value="baseline and differential"/>
</dbReference>
<dbReference type="GO" id="GO:0005524">
    <property type="term" value="F:ATP binding"/>
    <property type="evidence" value="ECO:0007669"/>
    <property type="project" value="UniProtKB-KW"/>
</dbReference>
<dbReference type="GO" id="GO:0004550">
    <property type="term" value="F:nucleoside diphosphate kinase activity"/>
    <property type="evidence" value="ECO:0007669"/>
    <property type="project" value="UniProtKB-EC"/>
</dbReference>
<dbReference type="GO" id="GO:0006241">
    <property type="term" value="P:CTP biosynthetic process"/>
    <property type="evidence" value="ECO:0007669"/>
    <property type="project" value="InterPro"/>
</dbReference>
<dbReference type="GO" id="GO:0006183">
    <property type="term" value="P:GTP biosynthetic process"/>
    <property type="evidence" value="ECO:0007669"/>
    <property type="project" value="InterPro"/>
</dbReference>
<dbReference type="GO" id="GO:0006228">
    <property type="term" value="P:UTP biosynthetic process"/>
    <property type="evidence" value="ECO:0007669"/>
    <property type="project" value="InterPro"/>
</dbReference>
<dbReference type="Gene3D" id="3.30.70.141">
    <property type="entry name" value="Nucleoside diphosphate kinase-like domain"/>
    <property type="match status" value="1"/>
</dbReference>
<dbReference type="InterPro" id="IPR034907">
    <property type="entry name" value="NDK-like_dom"/>
</dbReference>
<dbReference type="InterPro" id="IPR036850">
    <property type="entry name" value="NDK-like_dom_sf"/>
</dbReference>
<dbReference type="InterPro" id="IPR001564">
    <property type="entry name" value="Nucleoside_diP_kinase"/>
</dbReference>
<dbReference type="PANTHER" id="PTHR46161">
    <property type="entry name" value="NUCLEOSIDE DIPHOSPHATE KINASE"/>
    <property type="match status" value="1"/>
</dbReference>
<dbReference type="PANTHER" id="PTHR46161:SF3">
    <property type="entry name" value="NUCLEOSIDE DIPHOSPHATE KINASE DDB_G0292928-RELATED"/>
    <property type="match status" value="1"/>
</dbReference>
<dbReference type="Pfam" id="PF00334">
    <property type="entry name" value="NDK"/>
    <property type="match status" value="1"/>
</dbReference>
<dbReference type="PRINTS" id="PR01243">
    <property type="entry name" value="NUCDPKINASE"/>
</dbReference>
<dbReference type="SMART" id="SM00562">
    <property type="entry name" value="NDK"/>
    <property type="match status" value="1"/>
</dbReference>
<dbReference type="SUPFAM" id="SSF54919">
    <property type="entry name" value="Nucleoside diphosphate kinase, NDK"/>
    <property type="match status" value="1"/>
</dbReference>
<dbReference type="PROSITE" id="PS51374">
    <property type="entry name" value="NDPK_LIKE"/>
    <property type="match status" value="1"/>
</dbReference>
<sequence length="144" mass="16048">MIKPDGVSGNYTEEIKTIVVEAGFNIVKEMLTQLDKETASAFYEEHSSRSFFPHLVTYMTSGPVLVMVLEKRNAVSDWRDLIGPTDAEKAKISHPHSIRALCGKNSQKNCVHGSDSTSSAEREIKFFFKDVVSGDIATQQHDEL</sequence>
<keyword id="KW-0025">Alternative splicing</keyword>
<keyword id="KW-0067">ATP-binding</keyword>
<keyword id="KW-0418">Kinase</keyword>
<keyword id="KW-0547">Nucleotide-binding</keyword>
<keyword id="KW-1185">Reference proteome</keyword>
<keyword id="KW-0808">Transferase</keyword>
<comment type="function">
    <text evidence="1">Involved in the synthesis of nucleoside triphosphates other than ATP. The ATP gamma phosphate is transferred to the NDP beta phosphate via a ping-pong mechanism, using a phosphorylated active-site intermediate (By similarity).</text>
</comment>
<comment type="catalytic activity">
    <reaction>
        <text>a 2'-deoxyribonucleoside 5'-diphosphate + ATP = a 2'-deoxyribonucleoside 5'-triphosphate + ADP</text>
        <dbReference type="Rhea" id="RHEA:44640"/>
        <dbReference type="ChEBI" id="CHEBI:30616"/>
        <dbReference type="ChEBI" id="CHEBI:61560"/>
        <dbReference type="ChEBI" id="CHEBI:73316"/>
        <dbReference type="ChEBI" id="CHEBI:456216"/>
        <dbReference type="EC" id="2.7.4.6"/>
    </reaction>
</comment>
<comment type="catalytic activity">
    <reaction>
        <text>a ribonucleoside 5'-diphosphate + ATP = a ribonucleoside 5'-triphosphate + ADP</text>
        <dbReference type="Rhea" id="RHEA:18113"/>
        <dbReference type="ChEBI" id="CHEBI:30616"/>
        <dbReference type="ChEBI" id="CHEBI:57930"/>
        <dbReference type="ChEBI" id="CHEBI:61557"/>
        <dbReference type="ChEBI" id="CHEBI:456216"/>
        <dbReference type="EC" id="2.7.4.6"/>
    </reaction>
</comment>
<comment type="alternative products">
    <event type="alternative splicing"/>
    <isoform>
        <id>Q6NLG3-1</id>
        <name>1</name>
        <sequence type="displayed"/>
    </isoform>
    <text>A number of isoforms are produced. According to EST sequences.</text>
</comment>
<comment type="similarity">
    <text evidence="2">Belongs to the NDK family.</text>
</comment>
<comment type="sequence caution" evidence="2">
    <conflict type="erroneous gene model prediction">
        <sequence resource="EMBL-CDS" id="AAF97316"/>
    </conflict>
</comment>
<evidence type="ECO:0000250" key="1"/>
<evidence type="ECO:0000305" key="2"/>
<proteinExistence type="evidence at transcript level"/>
<gene>
    <name type="ordered locus">At1g17410</name>
    <name type="ORF">F28G4.12</name>
</gene>
<reference key="1">
    <citation type="journal article" date="2000" name="Nature">
        <title>Sequence and analysis of chromosome 1 of the plant Arabidopsis thaliana.</title>
        <authorList>
            <person name="Theologis A."/>
            <person name="Ecker J.R."/>
            <person name="Palm C.J."/>
            <person name="Federspiel N.A."/>
            <person name="Kaul S."/>
            <person name="White O."/>
            <person name="Alonso J."/>
            <person name="Altafi H."/>
            <person name="Araujo R."/>
            <person name="Bowman C.L."/>
            <person name="Brooks S.Y."/>
            <person name="Buehler E."/>
            <person name="Chan A."/>
            <person name="Chao Q."/>
            <person name="Chen H."/>
            <person name="Cheuk R.F."/>
            <person name="Chin C.W."/>
            <person name="Chung M.K."/>
            <person name="Conn L."/>
            <person name="Conway A.B."/>
            <person name="Conway A.R."/>
            <person name="Creasy T.H."/>
            <person name="Dewar K."/>
            <person name="Dunn P."/>
            <person name="Etgu P."/>
            <person name="Feldblyum T.V."/>
            <person name="Feng J.-D."/>
            <person name="Fong B."/>
            <person name="Fujii C.Y."/>
            <person name="Gill J.E."/>
            <person name="Goldsmith A.D."/>
            <person name="Haas B."/>
            <person name="Hansen N.F."/>
            <person name="Hughes B."/>
            <person name="Huizar L."/>
            <person name="Hunter J.L."/>
            <person name="Jenkins J."/>
            <person name="Johnson-Hopson C."/>
            <person name="Khan S."/>
            <person name="Khaykin E."/>
            <person name="Kim C.J."/>
            <person name="Koo H.L."/>
            <person name="Kremenetskaia I."/>
            <person name="Kurtz D.B."/>
            <person name="Kwan A."/>
            <person name="Lam B."/>
            <person name="Langin-Hooper S."/>
            <person name="Lee A."/>
            <person name="Lee J.M."/>
            <person name="Lenz C.A."/>
            <person name="Li J.H."/>
            <person name="Li Y.-P."/>
            <person name="Lin X."/>
            <person name="Liu S.X."/>
            <person name="Liu Z.A."/>
            <person name="Luros J.S."/>
            <person name="Maiti R."/>
            <person name="Marziali A."/>
            <person name="Militscher J."/>
            <person name="Miranda M."/>
            <person name="Nguyen M."/>
            <person name="Nierman W.C."/>
            <person name="Osborne B.I."/>
            <person name="Pai G."/>
            <person name="Peterson J."/>
            <person name="Pham P.K."/>
            <person name="Rizzo M."/>
            <person name="Rooney T."/>
            <person name="Rowley D."/>
            <person name="Sakano H."/>
            <person name="Salzberg S.L."/>
            <person name="Schwartz J.R."/>
            <person name="Shinn P."/>
            <person name="Southwick A.M."/>
            <person name="Sun H."/>
            <person name="Tallon L.J."/>
            <person name="Tambunga G."/>
            <person name="Toriumi M.J."/>
            <person name="Town C.D."/>
            <person name="Utterback T."/>
            <person name="Van Aken S."/>
            <person name="Vaysberg M."/>
            <person name="Vysotskaia V.S."/>
            <person name="Walker M."/>
            <person name="Wu D."/>
            <person name="Yu G."/>
            <person name="Fraser C.M."/>
            <person name="Venter J.C."/>
            <person name="Davis R.W."/>
        </authorList>
    </citation>
    <scope>NUCLEOTIDE SEQUENCE [LARGE SCALE GENOMIC DNA]</scope>
    <source>
        <strain>cv. Columbia</strain>
    </source>
</reference>
<reference key="2">
    <citation type="journal article" date="2017" name="Plant J.">
        <title>Araport11: a complete reannotation of the Arabidopsis thaliana reference genome.</title>
        <authorList>
            <person name="Cheng C.Y."/>
            <person name="Krishnakumar V."/>
            <person name="Chan A.P."/>
            <person name="Thibaud-Nissen F."/>
            <person name="Schobel S."/>
            <person name="Town C.D."/>
        </authorList>
    </citation>
    <scope>GENOME REANNOTATION</scope>
    <source>
        <strain>cv. Columbia</strain>
    </source>
</reference>
<reference key="3">
    <citation type="submission" date="2004-04" db="EMBL/GenBank/DDBJ databases">
        <title>Arabidopsis ORF clones.</title>
        <authorList>
            <person name="Shinn P."/>
            <person name="Chen H."/>
            <person name="Cheuk R.F."/>
            <person name="Kim C.J."/>
            <person name="Ecker J.R."/>
        </authorList>
    </citation>
    <scope>NUCLEOTIDE SEQUENCE [LARGE SCALE MRNA]</scope>
</reference>
<feature type="chain" id="PRO_0000425985" description="Probable nucleoside diphosphate kinase 5">
    <location>
        <begin position="1"/>
        <end position="144"/>
    </location>
</feature>
<feature type="active site" description="Pros-phosphohistidine intermediate" evidence="1">
    <location>
        <position position="112"/>
    </location>
</feature>
<feature type="binding site" evidence="1">
    <location>
        <position position="3"/>
    </location>
    <ligand>
        <name>ATP</name>
        <dbReference type="ChEBI" id="CHEBI:30616"/>
    </ligand>
</feature>
<feature type="binding site" evidence="1">
    <location>
        <position position="51"/>
    </location>
    <ligand>
        <name>ATP</name>
        <dbReference type="ChEBI" id="CHEBI:30616"/>
    </ligand>
</feature>
<feature type="binding site" evidence="1">
    <location>
        <position position="79"/>
    </location>
    <ligand>
        <name>ATP</name>
        <dbReference type="ChEBI" id="CHEBI:30616"/>
    </ligand>
</feature>
<feature type="binding site" evidence="1">
    <location>
        <position position="85"/>
    </location>
    <ligand>
        <name>ATP</name>
        <dbReference type="ChEBI" id="CHEBI:30616"/>
    </ligand>
</feature>
<feature type="binding site" evidence="1">
    <location>
        <position position="99"/>
    </location>
    <ligand>
        <name>ATP</name>
        <dbReference type="ChEBI" id="CHEBI:30616"/>
    </ligand>
</feature>
<feature type="binding site" evidence="1">
    <location>
        <position position="109"/>
    </location>
    <ligand>
        <name>ATP</name>
        <dbReference type="ChEBI" id="CHEBI:30616"/>
    </ligand>
</feature>
<organism>
    <name type="scientific">Arabidopsis thaliana</name>
    <name type="common">Mouse-ear cress</name>
    <dbReference type="NCBI Taxonomy" id="3702"/>
    <lineage>
        <taxon>Eukaryota</taxon>
        <taxon>Viridiplantae</taxon>
        <taxon>Streptophyta</taxon>
        <taxon>Embryophyta</taxon>
        <taxon>Tracheophyta</taxon>
        <taxon>Spermatophyta</taxon>
        <taxon>Magnoliopsida</taxon>
        <taxon>eudicotyledons</taxon>
        <taxon>Gunneridae</taxon>
        <taxon>Pentapetalae</taxon>
        <taxon>rosids</taxon>
        <taxon>malvids</taxon>
        <taxon>Brassicales</taxon>
        <taxon>Brassicaceae</taxon>
        <taxon>Camelineae</taxon>
        <taxon>Arabidopsis</taxon>
    </lineage>
</organism>
<name>NDK5_ARATH</name>
<protein>
    <recommendedName>
        <fullName>Probable nucleoside diphosphate kinase 5</fullName>
        <ecNumber>2.7.4.6</ecNumber>
    </recommendedName>
    <alternativeName>
        <fullName>Nucleoside diphosphate kinase V</fullName>
    </alternativeName>
</protein>
<accession>Q6NLG3</accession>
<accession>Q9LQJ3</accession>